<keyword id="KW-0963">Cytoplasm</keyword>
<keyword id="KW-0341">Growth regulation</keyword>
<keyword id="KW-1185">Reference proteome</keyword>
<keyword id="KW-0727">SH2 domain</keyword>
<feature type="chain" id="PRO_0000327223" description="SHC-transforming protein 1">
    <location>
        <begin position="1"/>
        <end position="465"/>
    </location>
</feature>
<feature type="domain" description="PID" evidence="2">
    <location>
        <begin position="44"/>
        <end position="227"/>
    </location>
</feature>
<feature type="domain" description="SH2" evidence="3">
    <location>
        <begin position="370"/>
        <end position="461"/>
    </location>
</feature>
<feature type="region of interest" description="CH1">
    <location>
        <begin position="228"/>
        <end position="369"/>
    </location>
</feature>
<feature type="region of interest" description="Disordered" evidence="4">
    <location>
        <begin position="281"/>
        <end position="315"/>
    </location>
</feature>
<comment type="function">
    <text evidence="5">Implicated in ras-dependent oocyte maturation induced by insulin/IGF1.</text>
</comment>
<comment type="subunit">
    <text>Interacts with grb2.</text>
</comment>
<comment type="subcellular location">
    <subcellularLocation>
        <location evidence="1">Cytoplasm</location>
    </subcellularLocation>
</comment>
<comment type="tissue specificity">
    <text evidence="5">Highly expressed in oocytes and embryo. Also expressed in liver. Detected in ovary, testis and heart and to a lesser extent in liver (at protein level).</text>
</comment>
<comment type="sequence caution" evidence="6">
    <conflict type="erroneous initiation">
        <sequence resource="EMBL-CDS" id="AAK14789"/>
    </conflict>
</comment>
<proteinExistence type="evidence at protein level"/>
<gene>
    <name type="primary">shc1</name>
</gene>
<sequence>MNKLSCGRKSRVEGGQLAGDEWTRHGSFVNKPTRGWLHPDDKVMGPGVPYLVRYMGCVEVLQSMRALDFNTRTQVTREAISLVCDAVPGAKGAMRRRKTCGRSLNSILGKSNLKFAGMPITLTVSTSSLNLMASDCKQIIANHHMQSISFASGGDPDTAEYVAYVAKDPVNQRACHILECPEGLAQDVISTIGQAFELRFKQYLKNPPKLVTPHDRMAGFDGSAWDEEEEELPDHAYYNDFPGKEPPIGGVVDMRLRDGAAPAVLRQSPNHMGATLPVGQVSGAEQDSRKMQPTLQGRERFPVPCSRPPNRPDLFDDPSYVNVQNLEKSRQPLRAANGQRDIFDMKPFDDALPSAQAIVSMEDQLKREPWYQGKMSRKEAERLLKVNGDFLVRESTTTPGQYVLTGLQCGQPKHLLLVDPEGVVRTKDHRFESVSHLISYHMDNHLPIISAGSELCLQQPVERRQ</sequence>
<protein>
    <recommendedName>
        <fullName>SHC-transforming protein 1</fullName>
    </recommendedName>
    <alternativeName>
        <fullName>Src homology 2 domain-containing-transforming protein C1</fullName>
        <shortName>SH2 domain protein C1</shortName>
    </alternativeName>
    <alternativeName>
        <fullName>p60Shc</fullName>
    </alternativeName>
</protein>
<dbReference type="EMBL" id="AY027793">
    <property type="protein sequence ID" value="AAK14789.1"/>
    <property type="status" value="ALT_INIT"/>
    <property type="molecule type" value="mRNA"/>
</dbReference>
<dbReference type="EMBL" id="BC089178">
    <property type="protein sequence ID" value="AAH89178.1"/>
    <property type="molecule type" value="mRNA"/>
</dbReference>
<dbReference type="RefSeq" id="NP_001083932.1">
    <property type="nucleotide sequence ID" value="NM_001090463.1"/>
</dbReference>
<dbReference type="RefSeq" id="XP_018084264.1">
    <property type="nucleotide sequence ID" value="XM_018228775.1"/>
</dbReference>
<dbReference type="SMR" id="Q8AY68"/>
<dbReference type="BioGRID" id="100523">
    <property type="interactions" value="1"/>
</dbReference>
<dbReference type="IntAct" id="Q8AY68">
    <property type="interactions" value="1"/>
</dbReference>
<dbReference type="DNASU" id="399198"/>
<dbReference type="GeneID" id="399198"/>
<dbReference type="KEGG" id="xla:399198"/>
<dbReference type="AGR" id="Xenbase:XB-GENE-494866"/>
<dbReference type="CTD" id="399198"/>
<dbReference type="OrthoDB" id="9938362at2759"/>
<dbReference type="Proteomes" id="UP000186698">
    <property type="component" value="Chromosome 8L"/>
</dbReference>
<dbReference type="Bgee" id="399198">
    <property type="expression patterns" value="Expressed in spleen and 20 other cell types or tissues"/>
</dbReference>
<dbReference type="GO" id="GO:0005737">
    <property type="term" value="C:cytoplasm"/>
    <property type="evidence" value="ECO:0007669"/>
    <property type="project" value="UniProtKB-SubCell"/>
</dbReference>
<dbReference type="GO" id="GO:0005886">
    <property type="term" value="C:plasma membrane"/>
    <property type="evidence" value="ECO:0000318"/>
    <property type="project" value="GO_Central"/>
</dbReference>
<dbReference type="GO" id="GO:0030971">
    <property type="term" value="F:receptor tyrosine kinase binding"/>
    <property type="evidence" value="ECO:0000318"/>
    <property type="project" value="GO_Central"/>
</dbReference>
<dbReference type="GO" id="GO:0007169">
    <property type="term" value="P:cell surface receptor protein tyrosine kinase signaling pathway"/>
    <property type="evidence" value="ECO:0000318"/>
    <property type="project" value="GO_Central"/>
</dbReference>
<dbReference type="GO" id="GO:0035556">
    <property type="term" value="P:intracellular signal transduction"/>
    <property type="evidence" value="ECO:0007669"/>
    <property type="project" value="InterPro"/>
</dbReference>
<dbReference type="CDD" id="cd01209">
    <property type="entry name" value="PTB_Shc"/>
    <property type="match status" value="1"/>
</dbReference>
<dbReference type="CDD" id="cd09925">
    <property type="entry name" value="SH2_SHC"/>
    <property type="match status" value="1"/>
</dbReference>
<dbReference type="FunFam" id="2.30.29.30:FF:000036">
    <property type="entry name" value="SHC-transforming protein 1 isoform 3"/>
    <property type="match status" value="1"/>
</dbReference>
<dbReference type="FunFam" id="3.30.505.10:FF:000005">
    <property type="entry name" value="SHC-transforming protein 1 isoform 3"/>
    <property type="match status" value="1"/>
</dbReference>
<dbReference type="Gene3D" id="2.30.29.30">
    <property type="entry name" value="Pleckstrin-homology domain (PH domain)/Phosphotyrosine-binding domain (PTB)"/>
    <property type="match status" value="1"/>
</dbReference>
<dbReference type="Gene3D" id="3.30.505.10">
    <property type="entry name" value="SH2 domain"/>
    <property type="match status" value="1"/>
</dbReference>
<dbReference type="InterPro" id="IPR051235">
    <property type="entry name" value="CEP152/SHC-Transforming"/>
</dbReference>
<dbReference type="InterPro" id="IPR011993">
    <property type="entry name" value="PH-like_dom_sf"/>
</dbReference>
<dbReference type="InterPro" id="IPR006019">
    <property type="entry name" value="PID_Shc-like"/>
</dbReference>
<dbReference type="InterPro" id="IPR006020">
    <property type="entry name" value="PTB/PI_dom"/>
</dbReference>
<dbReference type="InterPro" id="IPR000980">
    <property type="entry name" value="SH2"/>
</dbReference>
<dbReference type="InterPro" id="IPR036860">
    <property type="entry name" value="SH2_dom_sf"/>
</dbReference>
<dbReference type="InterPro" id="IPR035676">
    <property type="entry name" value="SHC_SH2"/>
</dbReference>
<dbReference type="PANTHER" id="PTHR10337">
    <property type="entry name" value="SHC TRANSFORMING PROTEIN"/>
    <property type="match status" value="1"/>
</dbReference>
<dbReference type="PANTHER" id="PTHR10337:SF2">
    <property type="entry name" value="SHC-TRANSFORMING PROTEIN 1"/>
    <property type="match status" value="1"/>
</dbReference>
<dbReference type="Pfam" id="PF00640">
    <property type="entry name" value="PID"/>
    <property type="match status" value="1"/>
</dbReference>
<dbReference type="Pfam" id="PF00017">
    <property type="entry name" value="SH2"/>
    <property type="match status" value="1"/>
</dbReference>
<dbReference type="PRINTS" id="PR00401">
    <property type="entry name" value="SH2DOMAIN"/>
</dbReference>
<dbReference type="PRINTS" id="PR00629">
    <property type="entry name" value="SHCPIDOMAIN"/>
</dbReference>
<dbReference type="SMART" id="SM00462">
    <property type="entry name" value="PTB"/>
    <property type="match status" value="1"/>
</dbReference>
<dbReference type="SMART" id="SM00252">
    <property type="entry name" value="SH2"/>
    <property type="match status" value="1"/>
</dbReference>
<dbReference type="SUPFAM" id="SSF50729">
    <property type="entry name" value="PH domain-like"/>
    <property type="match status" value="1"/>
</dbReference>
<dbReference type="SUPFAM" id="SSF55550">
    <property type="entry name" value="SH2 domain"/>
    <property type="match status" value="1"/>
</dbReference>
<dbReference type="PROSITE" id="PS01179">
    <property type="entry name" value="PID"/>
    <property type="match status" value="1"/>
</dbReference>
<dbReference type="PROSITE" id="PS50001">
    <property type="entry name" value="SH2"/>
    <property type="match status" value="1"/>
</dbReference>
<evidence type="ECO:0000250" key="1"/>
<evidence type="ECO:0000255" key="2">
    <source>
        <dbReference type="PROSITE-ProRule" id="PRU00148"/>
    </source>
</evidence>
<evidence type="ECO:0000255" key="3">
    <source>
        <dbReference type="PROSITE-ProRule" id="PRU00191"/>
    </source>
</evidence>
<evidence type="ECO:0000256" key="4">
    <source>
        <dbReference type="SAM" id="MobiDB-lite"/>
    </source>
</evidence>
<evidence type="ECO:0000269" key="5">
    <source>
    </source>
</evidence>
<evidence type="ECO:0000305" key="6"/>
<organism>
    <name type="scientific">Xenopus laevis</name>
    <name type="common">African clawed frog</name>
    <dbReference type="NCBI Taxonomy" id="8355"/>
    <lineage>
        <taxon>Eukaryota</taxon>
        <taxon>Metazoa</taxon>
        <taxon>Chordata</taxon>
        <taxon>Craniata</taxon>
        <taxon>Vertebrata</taxon>
        <taxon>Euteleostomi</taxon>
        <taxon>Amphibia</taxon>
        <taxon>Batrachia</taxon>
        <taxon>Anura</taxon>
        <taxon>Pipoidea</taxon>
        <taxon>Pipidae</taxon>
        <taxon>Xenopodinae</taxon>
        <taxon>Xenopus</taxon>
        <taxon>Xenopus</taxon>
    </lineage>
</organism>
<accession>Q8AY68</accession>
<accession>Q5FWW5</accession>
<reference key="1">
    <citation type="journal article" date="2003" name="Biol. Cell">
        <title>Molecular cloning and characterization of an adaptor protein Shc isoform from Xenopus laevis oocytes.</title>
        <authorList>
            <person name="Chesnel F."/>
            <person name="Heligon C."/>
            <person name="Richard-Parpaillon L."/>
            <person name="Boujard D."/>
        </authorList>
    </citation>
    <scope>NUCLEOTIDE SEQUENCE [MRNA]</scope>
    <scope>FUNCTION</scope>
    <scope>TISSUE SPECIFICITY</scope>
</reference>
<reference key="2">
    <citation type="submission" date="2005-01" db="EMBL/GenBank/DDBJ databases">
        <authorList>
            <consortium name="NIH - Xenopus Gene Collection (XGC) project"/>
        </authorList>
    </citation>
    <scope>NUCLEOTIDE SEQUENCE [LARGE SCALE MRNA]</scope>
    <source>
        <tissue>Embryo</tissue>
    </source>
</reference>
<name>SHC1_XENLA</name>